<evidence type="ECO:0000255" key="1">
    <source>
        <dbReference type="HAMAP-Rule" id="MF_00444"/>
    </source>
</evidence>
<accession>Q2MIG3</accession>
<organism>
    <name type="scientific">Solanum bulbocastanum</name>
    <name type="common">Wild potato</name>
    <dbReference type="NCBI Taxonomy" id="147425"/>
    <lineage>
        <taxon>Eukaryota</taxon>
        <taxon>Viridiplantae</taxon>
        <taxon>Streptophyta</taxon>
        <taxon>Embryophyta</taxon>
        <taxon>Tracheophyta</taxon>
        <taxon>Spermatophyta</taxon>
        <taxon>Magnoliopsida</taxon>
        <taxon>eudicotyledons</taxon>
        <taxon>Gunneridae</taxon>
        <taxon>Pentapetalae</taxon>
        <taxon>asterids</taxon>
        <taxon>lamiids</taxon>
        <taxon>Solanales</taxon>
        <taxon>Solanaceae</taxon>
        <taxon>Solanoideae</taxon>
        <taxon>Solaneae</taxon>
        <taxon>Solanum</taxon>
    </lineage>
</organism>
<comment type="function">
    <text evidence="1">Cleaves peptides in various proteins in a process that requires ATP hydrolysis. Has a chymotrypsin-like activity. Plays a major role in the degradation of misfolded proteins.</text>
</comment>
<comment type="catalytic activity">
    <reaction evidence="1">
        <text>Hydrolysis of proteins to small peptides in the presence of ATP and magnesium. alpha-casein is the usual test substrate. In the absence of ATP, only oligopeptides shorter than five residues are hydrolyzed (such as succinyl-Leu-Tyr-|-NHMec, and Leu-Tyr-Leu-|-Tyr-Trp, in which cleavage of the -Tyr-|-Leu- and -Tyr-|-Trp bonds also occurs).</text>
        <dbReference type="EC" id="3.4.21.92"/>
    </reaction>
</comment>
<comment type="subunit">
    <text>Component of the chloroplastic Clp protease core complex.</text>
</comment>
<comment type="subcellular location">
    <subcellularLocation>
        <location evidence="1">Plastid</location>
        <location evidence="1">Chloroplast stroma</location>
    </subcellularLocation>
</comment>
<comment type="similarity">
    <text evidence="1">Belongs to the peptidase S14 family.</text>
</comment>
<feature type="chain" id="PRO_0000275301" description="ATP-dependent Clp protease proteolytic subunit">
    <location>
        <begin position="1"/>
        <end position="198"/>
    </location>
</feature>
<feature type="active site" description="Nucleophile" evidence="1">
    <location>
        <position position="101"/>
    </location>
</feature>
<feature type="active site" evidence="1">
    <location>
        <position position="126"/>
    </location>
</feature>
<dbReference type="EC" id="3.4.21.92" evidence="1"/>
<dbReference type="EMBL" id="DQ347958">
    <property type="protein sequence ID" value="ABC56237.1"/>
    <property type="molecule type" value="Genomic_DNA"/>
</dbReference>
<dbReference type="RefSeq" id="YP_538874.1">
    <property type="nucleotide sequence ID" value="NC_007943.1"/>
</dbReference>
<dbReference type="SMR" id="Q2MIG3"/>
<dbReference type="MEROPS" id="S14.002"/>
<dbReference type="GeneID" id="3989517"/>
<dbReference type="GO" id="GO:0009570">
    <property type="term" value="C:chloroplast stroma"/>
    <property type="evidence" value="ECO:0007669"/>
    <property type="project" value="UniProtKB-SubCell"/>
</dbReference>
<dbReference type="GO" id="GO:0009368">
    <property type="term" value="C:endopeptidase Clp complex"/>
    <property type="evidence" value="ECO:0007669"/>
    <property type="project" value="TreeGrafter"/>
</dbReference>
<dbReference type="GO" id="GO:0004176">
    <property type="term" value="F:ATP-dependent peptidase activity"/>
    <property type="evidence" value="ECO:0007669"/>
    <property type="project" value="InterPro"/>
</dbReference>
<dbReference type="GO" id="GO:0051117">
    <property type="term" value="F:ATPase binding"/>
    <property type="evidence" value="ECO:0007669"/>
    <property type="project" value="TreeGrafter"/>
</dbReference>
<dbReference type="GO" id="GO:0004252">
    <property type="term" value="F:serine-type endopeptidase activity"/>
    <property type="evidence" value="ECO:0007669"/>
    <property type="project" value="UniProtKB-UniRule"/>
</dbReference>
<dbReference type="GO" id="GO:0006515">
    <property type="term" value="P:protein quality control for misfolded or incompletely synthesized proteins"/>
    <property type="evidence" value="ECO:0007669"/>
    <property type="project" value="TreeGrafter"/>
</dbReference>
<dbReference type="CDD" id="cd07017">
    <property type="entry name" value="S14_ClpP_2"/>
    <property type="match status" value="1"/>
</dbReference>
<dbReference type="FunFam" id="3.90.226.10:FF:000006">
    <property type="entry name" value="ATP-dependent Clp protease proteolytic subunit"/>
    <property type="match status" value="1"/>
</dbReference>
<dbReference type="Gene3D" id="3.90.226.10">
    <property type="entry name" value="2-enoyl-CoA Hydratase, Chain A, domain 1"/>
    <property type="match status" value="1"/>
</dbReference>
<dbReference type="HAMAP" id="MF_00444">
    <property type="entry name" value="ClpP"/>
    <property type="match status" value="1"/>
</dbReference>
<dbReference type="InterPro" id="IPR001907">
    <property type="entry name" value="ClpP"/>
</dbReference>
<dbReference type="InterPro" id="IPR029045">
    <property type="entry name" value="ClpP/crotonase-like_dom_sf"/>
</dbReference>
<dbReference type="InterPro" id="IPR023562">
    <property type="entry name" value="ClpP/TepA"/>
</dbReference>
<dbReference type="InterPro" id="IPR018215">
    <property type="entry name" value="ClpP_Ser_AS"/>
</dbReference>
<dbReference type="PANTHER" id="PTHR10381">
    <property type="entry name" value="ATP-DEPENDENT CLP PROTEASE PROTEOLYTIC SUBUNIT"/>
    <property type="match status" value="1"/>
</dbReference>
<dbReference type="PANTHER" id="PTHR10381:SF15">
    <property type="entry name" value="CHLOROPLASTIC ATP-DEPENDENT CLP PROTEASE PROTEOLYTIC SUBUNIT 1"/>
    <property type="match status" value="1"/>
</dbReference>
<dbReference type="Pfam" id="PF00574">
    <property type="entry name" value="CLP_protease"/>
    <property type="match status" value="1"/>
</dbReference>
<dbReference type="PRINTS" id="PR00127">
    <property type="entry name" value="CLPPROTEASEP"/>
</dbReference>
<dbReference type="SUPFAM" id="SSF52096">
    <property type="entry name" value="ClpP/crotonase"/>
    <property type="match status" value="1"/>
</dbReference>
<dbReference type="PROSITE" id="PS00381">
    <property type="entry name" value="CLP_PROTEASE_SER"/>
    <property type="match status" value="1"/>
</dbReference>
<name>CLPP_SOLBU</name>
<gene>
    <name evidence="1" type="primary">clpP</name>
</gene>
<reference key="1">
    <citation type="journal article" date="2006" name="Theor. Appl. Genet.">
        <title>Complete chloroplast genome sequences of Solanum bulbocastanum, Solanum lycopersicum and comparative analyses with other Solanaceae genomes.</title>
        <authorList>
            <person name="Daniell H."/>
            <person name="Lee S.-B."/>
            <person name="Grevich J."/>
            <person name="Saski C."/>
            <person name="Quesada-Vargas T."/>
            <person name="Guda C."/>
            <person name="Tomkins J."/>
            <person name="Jansen R.K."/>
        </authorList>
    </citation>
    <scope>NUCLEOTIDE SEQUENCE [LARGE SCALE GENOMIC DNA]</scope>
    <source>
        <strain>cv. PT29</strain>
    </source>
</reference>
<proteinExistence type="inferred from homology"/>
<sequence length="198" mass="22424">MPIGVPKVLFRNPGDPISSWVDVYNRLYRERLLFLGQGISTDLSNQLIGLMMYLSMEDENKELYLFVNSPGGWVIPGIAIYDTMQFVRPDIHTICIGLAASMGSFILAGGQLTKRIAFPHARVMIHEPYSAFYMAQVGEFVMEAVELMKLRETLTRVYAERTGKPFWVVHEDMERDIFMSATEAQAYGIVDFVAVQGK</sequence>
<protein>
    <recommendedName>
        <fullName evidence="1">ATP-dependent Clp protease proteolytic subunit</fullName>
        <ecNumber evidence="1">3.4.21.92</ecNumber>
    </recommendedName>
    <alternativeName>
        <fullName evidence="1">Endopeptidase Clp</fullName>
    </alternativeName>
</protein>
<keyword id="KW-0150">Chloroplast</keyword>
<keyword id="KW-0378">Hydrolase</keyword>
<keyword id="KW-0934">Plastid</keyword>
<keyword id="KW-0645">Protease</keyword>
<keyword id="KW-0720">Serine protease</keyword>
<geneLocation type="chloroplast"/>